<keyword id="KW-0028">Amino-acid biosynthesis</keyword>
<keyword id="KW-0057">Aromatic amino acid biosynthesis</keyword>
<keyword id="KW-0456">Lyase</keyword>
<keyword id="KW-0460">Magnesium</keyword>
<keyword id="KW-0479">Metal-binding</keyword>
<keyword id="KW-0822">Tryptophan biosynthesis</keyword>
<accession>Q9S358</accession>
<accession>A1KTT8</accession>
<organism>
    <name type="scientific">Neisseria meningitidis serogroup C / serotype 2a (strain ATCC 700532 / DSM 15464 / FAM18)</name>
    <dbReference type="NCBI Taxonomy" id="272831"/>
    <lineage>
        <taxon>Bacteria</taxon>
        <taxon>Pseudomonadati</taxon>
        <taxon>Pseudomonadota</taxon>
        <taxon>Betaproteobacteria</taxon>
        <taxon>Neisseriales</taxon>
        <taxon>Neisseriaceae</taxon>
        <taxon>Neisseria</taxon>
    </lineage>
</organism>
<feature type="chain" id="PRO_0000154105" description="Anthranilate synthase component 1">
    <location>
        <begin position="1"/>
        <end position="491"/>
    </location>
</feature>
<feature type="binding site" evidence="2">
    <location>
        <position position="49"/>
    </location>
    <ligand>
        <name>L-tryptophan</name>
        <dbReference type="ChEBI" id="CHEBI:57912"/>
    </ligand>
</feature>
<feature type="binding site" evidence="2">
    <location>
        <begin position="271"/>
        <end position="273"/>
    </location>
    <ligand>
        <name>L-tryptophan</name>
        <dbReference type="ChEBI" id="CHEBI:57912"/>
    </ligand>
</feature>
<feature type="binding site" evidence="2">
    <location>
        <begin position="306"/>
        <end position="307"/>
    </location>
    <ligand>
        <name>chorismate</name>
        <dbReference type="ChEBI" id="CHEBI:29748"/>
    </ligand>
</feature>
<feature type="binding site" evidence="2">
    <location>
        <position position="333"/>
    </location>
    <ligand>
        <name>Mg(2+)</name>
        <dbReference type="ChEBI" id="CHEBI:18420"/>
    </ligand>
</feature>
<feature type="binding site" evidence="2">
    <location>
        <position position="421"/>
    </location>
    <ligand>
        <name>chorismate</name>
        <dbReference type="ChEBI" id="CHEBI:29748"/>
    </ligand>
</feature>
<feature type="binding site" evidence="2">
    <location>
        <position position="441"/>
    </location>
    <ligand>
        <name>chorismate</name>
        <dbReference type="ChEBI" id="CHEBI:29748"/>
    </ligand>
</feature>
<feature type="binding site" evidence="2">
    <location>
        <begin position="455"/>
        <end position="457"/>
    </location>
    <ligand>
        <name>chorismate</name>
        <dbReference type="ChEBI" id="CHEBI:29748"/>
    </ligand>
</feature>
<feature type="binding site" evidence="2">
    <location>
        <position position="457"/>
    </location>
    <ligand>
        <name>chorismate</name>
        <dbReference type="ChEBI" id="CHEBI:29748"/>
    </ligand>
</feature>
<feature type="binding site" evidence="2">
    <location>
        <position position="470"/>
    </location>
    <ligand>
        <name>Mg(2+)</name>
        <dbReference type="ChEBI" id="CHEBI:18420"/>
    </ligand>
</feature>
<dbReference type="EC" id="4.1.3.27"/>
<dbReference type="EMBL" id="AJ242842">
    <property type="protein sequence ID" value="CAB44980.1"/>
    <property type="molecule type" value="Genomic_DNA"/>
</dbReference>
<dbReference type="EMBL" id="AM421808">
    <property type="protein sequence ID" value="CAM10278.1"/>
    <property type="molecule type" value="Genomic_DNA"/>
</dbReference>
<dbReference type="RefSeq" id="WP_002224564.1">
    <property type="nucleotide sequence ID" value="NC_008767.1"/>
</dbReference>
<dbReference type="SMR" id="Q9S358"/>
<dbReference type="KEGG" id="nmc:NMC1013"/>
<dbReference type="HOGENOM" id="CLU_006493_9_3_4"/>
<dbReference type="UniPathway" id="UPA00035">
    <property type="reaction ID" value="UER00040"/>
</dbReference>
<dbReference type="Proteomes" id="UP000002286">
    <property type="component" value="Chromosome"/>
</dbReference>
<dbReference type="GO" id="GO:0004049">
    <property type="term" value="F:anthranilate synthase activity"/>
    <property type="evidence" value="ECO:0007669"/>
    <property type="project" value="UniProtKB-EC"/>
</dbReference>
<dbReference type="GO" id="GO:0046872">
    <property type="term" value="F:metal ion binding"/>
    <property type="evidence" value="ECO:0007669"/>
    <property type="project" value="UniProtKB-KW"/>
</dbReference>
<dbReference type="GO" id="GO:0000162">
    <property type="term" value="P:L-tryptophan biosynthetic process"/>
    <property type="evidence" value="ECO:0007669"/>
    <property type="project" value="UniProtKB-UniPathway"/>
</dbReference>
<dbReference type="Gene3D" id="3.60.120.10">
    <property type="entry name" value="Anthranilate synthase"/>
    <property type="match status" value="1"/>
</dbReference>
<dbReference type="InterPro" id="IPR005801">
    <property type="entry name" value="ADC_synthase"/>
</dbReference>
<dbReference type="InterPro" id="IPR019999">
    <property type="entry name" value="Anth_synth_I-like"/>
</dbReference>
<dbReference type="InterPro" id="IPR006805">
    <property type="entry name" value="Anth_synth_I_N"/>
</dbReference>
<dbReference type="InterPro" id="IPR005256">
    <property type="entry name" value="Anth_synth_I_PabB"/>
</dbReference>
<dbReference type="InterPro" id="IPR015890">
    <property type="entry name" value="Chorismate_C"/>
</dbReference>
<dbReference type="NCBIfam" id="TIGR00564">
    <property type="entry name" value="trpE_most"/>
    <property type="match status" value="1"/>
</dbReference>
<dbReference type="PANTHER" id="PTHR11236">
    <property type="entry name" value="AMINOBENZOATE/ANTHRANILATE SYNTHASE"/>
    <property type="match status" value="1"/>
</dbReference>
<dbReference type="PANTHER" id="PTHR11236:SF48">
    <property type="entry name" value="ISOCHORISMATE SYNTHASE MENF"/>
    <property type="match status" value="1"/>
</dbReference>
<dbReference type="Pfam" id="PF04715">
    <property type="entry name" value="Anth_synt_I_N"/>
    <property type="match status" value="1"/>
</dbReference>
<dbReference type="Pfam" id="PF00425">
    <property type="entry name" value="Chorismate_bind"/>
    <property type="match status" value="1"/>
</dbReference>
<dbReference type="PRINTS" id="PR00095">
    <property type="entry name" value="ANTSNTHASEI"/>
</dbReference>
<dbReference type="SUPFAM" id="SSF56322">
    <property type="entry name" value="ADC synthase"/>
    <property type="match status" value="1"/>
</dbReference>
<protein>
    <recommendedName>
        <fullName>Anthranilate synthase component 1</fullName>
        <shortName>AS</shortName>
        <shortName>ASI</shortName>
        <ecNumber>4.1.3.27</ecNumber>
    </recommendedName>
</protein>
<gene>
    <name type="primary">trpE</name>
    <name type="ordered locus">NMC1013</name>
</gene>
<reference key="1">
    <citation type="journal article" date="1999" name="Mol. Microbiol.">
        <title>The opcA and (psi)opcB regions in Neisseria: genes, pseudogenes, deletions, insertion elements and DNA islands.</title>
        <authorList>
            <person name="Zhu P."/>
            <person name="Morelli G."/>
            <person name="Achtman M."/>
        </authorList>
    </citation>
    <scope>NUCLEOTIDE SEQUENCE [GENOMIC DNA]</scope>
</reference>
<reference key="2">
    <citation type="journal article" date="2007" name="PLoS Genet.">
        <title>Meningococcal genetic variation mechanisms viewed through comparative analysis of serogroup C strain FAM18.</title>
        <authorList>
            <person name="Bentley S.D."/>
            <person name="Vernikos G.S."/>
            <person name="Snyder L.A.S."/>
            <person name="Churcher C."/>
            <person name="Arrowsmith C."/>
            <person name="Chillingworth T."/>
            <person name="Cronin A."/>
            <person name="Davis P.H."/>
            <person name="Holroyd N.E."/>
            <person name="Jagels K."/>
            <person name="Maddison M."/>
            <person name="Moule S."/>
            <person name="Rabbinowitsch E."/>
            <person name="Sharp S."/>
            <person name="Unwin L."/>
            <person name="Whitehead S."/>
            <person name="Quail M.A."/>
            <person name="Achtman M."/>
            <person name="Barrell B.G."/>
            <person name="Saunders N.J."/>
            <person name="Parkhill J."/>
        </authorList>
    </citation>
    <scope>NUCLEOTIDE SEQUENCE [LARGE SCALE GENOMIC DNA]</scope>
    <source>
        <strain>ATCC 700532 / DSM 15464 / FAM18</strain>
    </source>
</reference>
<proteinExistence type="inferred from homology"/>
<comment type="function">
    <text evidence="1">Part of a heterotetrameric complex that catalyzes the two-step biosynthesis of anthranilate, an intermediate in the biosynthesis of L-tryptophan. In the first step, the glutamine-binding beta subunit (TrpG) of anthranilate synthase (AS) provides the glutamine amidotransferase activity which generates ammonia as a substrate that, along with chorismate, is used in the second step, catalyzed by the large alpha subunit of AS (TrpE) to produce anthranilate. In the absence of TrpG, TrpE can synthesize anthranilate directly from chorismate and high concentrations of ammonia (By similarity).</text>
</comment>
<comment type="catalytic activity">
    <reaction>
        <text>chorismate + L-glutamine = anthranilate + pyruvate + L-glutamate + H(+)</text>
        <dbReference type="Rhea" id="RHEA:21732"/>
        <dbReference type="ChEBI" id="CHEBI:15361"/>
        <dbReference type="ChEBI" id="CHEBI:15378"/>
        <dbReference type="ChEBI" id="CHEBI:16567"/>
        <dbReference type="ChEBI" id="CHEBI:29748"/>
        <dbReference type="ChEBI" id="CHEBI:29985"/>
        <dbReference type="ChEBI" id="CHEBI:58359"/>
        <dbReference type="EC" id="4.1.3.27"/>
    </reaction>
</comment>
<comment type="cofactor">
    <cofactor evidence="2">
        <name>Mg(2+)</name>
        <dbReference type="ChEBI" id="CHEBI:18420"/>
    </cofactor>
    <text evidence="2">Binds 1 Mg(2+) ion per subunit.</text>
</comment>
<comment type="activity regulation">
    <text evidence="1">Feedback inhibited by tryptophan.</text>
</comment>
<comment type="pathway">
    <text>Amino-acid biosynthesis; L-tryptophan biosynthesis; L-tryptophan from chorismate: step 1/5.</text>
</comment>
<comment type="subunit">
    <text evidence="1">Heterotetramer consisting of two non-identical subunits: a beta subunit (TrpG) and a large alpha subunit (TrpE).</text>
</comment>
<comment type="similarity">
    <text evidence="3">Belongs to the anthranilate synthase component I family.</text>
</comment>
<sequence length="491" mass="54719">MISKQEYQAQAAQGYNRIPLVQELLADLDTPLSLYLKLANRPYTYLLESVVGGERFGRYSFIGLPCSHYLKASGKHVDVYQNGEIVEQHDGNPLPFIEAFHNRFKTPEIPSLPRFTGGLVGYFGYETIYNFEHFAHRLKNTTKADPLGTPDILLMLSQELAVVDNLSGKIYLIVYADPSQPDGYERARERLEDIRTQLRQSCAIPLSLGSKHTEAVSEFGEEPFKACVNKIKDYIFAGDCMQVVPSQRMSMEFTDSSLALYRALRTLNPSPYLFYYDFGDFHIVGSSPEILVRRERDDVIVRPIAGTRLRGKTPAEDLANEQDLLSDAKEIAEHVMLIDLGRNDVGRISKTGEVKVTDKMVIEKYSHVMHIVSNVEGRLKDGMTNMDILAATFPAGTLSGAPKVRAMEIIEEVEPSKRGIYGGAVGVWGFNNDMDLAIAIRTAVVKNNTLYVQSGAGVVADSDPASEWQETQNKARAVIHAAQMVQEGLDK</sequence>
<name>TRPE_NEIMF</name>
<evidence type="ECO:0000250" key="1"/>
<evidence type="ECO:0000250" key="2">
    <source>
        <dbReference type="UniProtKB" id="P00897"/>
    </source>
</evidence>
<evidence type="ECO:0000305" key="3"/>